<accession>Q9RL50</accession>
<comment type="similarity">
    <text evidence="3">Belongs to the bacterial ribosomal protein bL32 family.</text>
</comment>
<evidence type="ECO:0000255" key="1">
    <source>
        <dbReference type="HAMAP-Rule" id="MF_00340"/>
    </source>
</evidence>
<evidence type="ECO:0000256" key="2">
    <source>
        <dbReference type="SAM" id="MobiDB-lite"/>
    </source>
</evidence>
<evidence type="ECO:0000305" key="3"/>
<dbReference type="EMBL" id="AL939105">
    <property type="protein sequence ID" value="CAB56666.1"/>
    <property type="molecule type" value="Genomic_DNA"/>
</dbReference>
<dbReference type="RefSeq" id="NP_624757.1">
    <property type="nucleotide sequence ID" value="NC_003888.3"/>
</dbReference>
<dbReference type="SMR" id="Q9RL50"/>
<dbReference type="FunCoup" id="Q9RL50">
    <property type="interactions" value="55"/>
</dbReference>
<dbReference type="STRING" id="100226.gene:17758019"/>
<dbReference type="PaxDb" id="100226-SCO0436"/>
<dbReference type="KEGG" id="sco:SCO0436"/>
<dbReference type="PATRIC" id="fig|100226.15.peg.413"/>
<dbReference type="eggNOG" id="ENOG5033AVR">
    <property type="taxonomic scope" value="Bacteria"/>
</dbReference>
<dbReference type="HOGENOM" id="CLU_203263_0_0_11"/>
<dbReference type="InParanoid" id="Q9RL50"/>
<dbReference type="OrthoDB" id="9807363at2"/>
<dbReference type="Proteomes" id="UP000001973">
    <property type="component" value="Chromosome"/>
</dbReference>
<dbReference type="GO" id="GO:0015934">
    <property type="term" value="C:large ribosomal subunit"/>
    <property type="evidence" value="ECO:0007669"/>
    <property type="project" value="InterPro"/>
</dbReference>
<dbReference type="GO" id="GO:0003735">
    <property type="term" value="F:structural constituent of ribosome"/>
    <property type="evidence" value="ECO:0007669"/>
    <property type="project" value="InterPro"/>
</dbReference>
<dbReference type="GO" id="GO:0006412">
    <property type="term" value="P:translation"/>
    <property type="evidence" value="ECO:0007669"/>
    <property type="project" value="UniProtKB-UniRule"/>
</dbReference>
<dbReference type="HAMAP" id="MF_00340">
    <property type="entry name" value="Ribosomal_bL32"/>
    <property type="match status" value="1"/>
</dbReference>
<dbReference type="InterPro" id="IPR002677">
    <property type="entry name" value="Ribosomal_bL32"/>
</dbReference>
<dbReference type="InterPro" id="IPR011332">
    <property type="entry name" value="Ribosomal_zn-bd"/>
</dbReference>
<dbReference type="NCBIfam" id="TIGR01031">
    <property type="entry name" value="rpmF_bact"/>
    <property type="match status" value="1"/>
</dbReference>
<dbReference type="Pfam" id="PF01783">
    <property type="entry name" value="Ribosomal_L32p"/>
    <property type="match status" value="1"/>
</dbReference>
<dbReference type="SUPFAM" id="SSF57829">
    <property type="entry name" value="Zn-binding ribosomal proteins"/>
    <property type="match status" value="1"/>
</dbReference>
<keyword id="KW-1185">Reference proteome</keyword>
<keyword id="KW-0687">Ribonucleoprotein</keyword>
<keyword id="KW-0689">Ribosomal protein</keyword>
<gene>
    <name type="primary">rpmF2</name>
    <name type="ordered locus">SCO0436</name>
    <name type="ORF">SCF51A.14</name>
</gene>
<feature type="chain" id="PRO_0000172413" description="Large ribosomal subunit protein bL32B">
    <location>
        <begin position="1"/>
        <end position="56"/>
    </location>
</feature>
<feature type="region of interest" description="Disordered" evidence="2">
    <location>
        <begin position="1"/>
        <end position="22"/>
    </location>
</feature>
<feature type="compositionally biased region" description="Basic residues" evidence="2">
    <location>
        <begin position="1"/>
        <end position="19"/>
    </location>
</feature>
<proteinExistence type="inferred from homology"/>
<organism>
    <name type="scientific">Streptomyces coelicolor (strain ATCC BAA-471 / A3(2) / M145)</name>
    <dbReference type="NCBI Taxonomy" id="100226"/>
    <lineage>
        <taxon>Bacteria</taxon>
        <taxon>Bacillati</taxon>
        <taxon>Actinomycetota</taxon>
        <taxon>Actinomycetes</taxon>
        <taxon>Kitasatosporales</taxon>
        <taxon>Streptomycetaceae</taxon>
        <taxon>Streptomyces</taxon>
        <taxon>Streptomyces albidoflavus group</taxon>
    </lineage>
</organism>
<name>RL322_STRCO</name>
<reference key="1">
    <citation type="journal article" date="2002" name="Nature">
        <title>Complete genome sequence of the model actinomycete Streptomyces coelicolor A3(2).</title>
        <authorList>
            <person name="Bentley S.D."/>
            <person name="Chater K.F."/>
            <person name="Cerdeno-Tarraga A.-M."/>
            <person name="Challis G.L."/>
            <person name="Thomson N.R."/>
            <person name="James K.D."/>
            <person name="Harris D.E."/>
            <person name="Quail M.A."/>
            <person name="Kieser H."/>
            <person name="Harper D."/>
            <person name="Bateman A."/>
            <person name="Brown S."/>
            <person name="Chandra G."/>
            <person name="Chen C.W."/>
            <person name="Collins M."/>
            <person name="Cronin A."/>
            <person name="Fraser A."/>
            <person name="Goble A."/>
            <person name="Hidalgo J."/>
            <person name="Hornsby T."/>
            <person name="Howarth S."/>
            <person name="Huang C.-H."/>
            <person name="Kieser T."/>
            <person name="Larke L."/>
            <person name="Murphy L.D."/>
            <person name="Oliver K."/>
            <person name="O'Neil S."/>
            <person name="Rabbinowitsch E."/>
            <person name="Rajandream M.A."/>
            <person name="Rutherford K.M."/>
            <person name="Rutter S."/>
            <person name="Seeger K."/>
            <person name="Saunders D."/>
            <person name="Sharp S."/>
            <person name="Squares R."/>
            <person name="Squares S."/>
            <person name="Taylor K."/>
            <person name="Warren T."/>
            <person name="Wietzorrek A."/>
            <person name="Woodward J.R."/>
            <person name="Barrell B.G."/>
            <person name="Parkhill J."/>
            <person name="Hopwood D.A."/>
        </authorList>
    </citation>
    <scope>NUCLEOTIDE SEQUENCE [LARGE SCALE GENOMIC DNA]</scope>
    <source>
        <strain>ATCC BAA-471 / A3(2) / M145</strain>
    </source>
</reference>
<sequence length="56" mass="6499">MAVPKRRMSRSNTRHRRAQWKASTPNLVPVTVDGVTLRVPRHLVPAYRRGLLRPEI</sequence>
<protein>
    <recommendedName>
        <fullName evidence="1">Large ribosomal subunit protein bL32B</fullName>
    </recommendedName>
    <alternativeName>
        <fullName evidence="3">50S ribosomal protein L32 2</fullName>
    </alternativeName>
</protein>